<feature type="chain" id="PRO_0000301889" description="3-hydroxyacyl-[acyl-carrier-protein] dehydratase FabZ">
    <location>
        <begin position="1"/>
        <end position="139"/>
    </location>
</feature>
<feature type="active site" evidence="1">
    <location>
        <position position="47"/>
    </location>
</feature>
<name>FABZ_CLOPS</name>
<proteinExistence type="inferred from homology"/>
<organism>
    <name type="scientific">Clostridium perfringens (strain SM101 / Type A)</name>
    <dbReference type="NCBI Taxonomy" id="289380"/>
    <lineage>
        <taxon>Bacteria</taxon>
        <taxon>Bacillati</taxon>
        <taxon>Bacillota</taxon>
        <taxon>Clostridia</taxon>
        <taxon>Eubacteriales</taxon>
        <taxon>Clostridiaceae</taxon>
        <taxon>Clostridium</taxon>
    </lineage>
</organism>
<reference key="1">
    <citation type="journal article" date="2006" name="Genome Res.">
        <title>Skewed genomic variability in strains of the toxigenic bacterial pathogen, Clostridium perfringens.</title>
        <authorList>
            <person name="Myers G.S.A."/>
            <person name="Rasko D.A."/>
            <person name="Cheung J.K."/>
            <person name="Ravel J."/>
            <person name="Seshadri R."/>
            <person name="DeBoy R.T."/>
            <person name="Ren Q."/>
            <person name="Varga J."/>
            <person name="Awad M.M."/>
            <person name="Brinkac L.M."/>
            <person name="Daugherty S.C."/>
            <person name="Haft D.H."/>
            <person name="Dodson R.J."/>
            <person name="Madupu R."/>
            <person name="Nelson W.C."/>
            <person name="Rosovitz M.J."/>
            <person name="Sullivan S.A."/>
            <person name="Khouri H."/>
            <person name="Dimitrov G.I."/>
            <person name="Watkins K.L."/>
            <person name="Mulligan S."/>
            <person name="Benton J."/>
            <person name="Radune D."/>
            <person name="Fisher D.J."/>
            <person name="Atkins H.S."/>
            <person name="Hiscox T."/>
            <person name="Jost B.H."/>
            <person name="Billington S.J."/>
            <person name="Songer J.G."/>
            <person name="McClane B.A."/>
            <person name="Titball R.W."/>
            <person name="Rood J.I."/>
            <person name="Melville S.B."/>
            <person name="Paulsen I.T."/>
        </authorList>
    </citation>
    <scope>NUCLEOTIDE SEQUENCE [LARGE SCALE GENOMIC DNA]</scope>
    <source>
        <strain>SM101 / Type A</strain>
    </source>
</reference>
<evidence type="ECO:0000255" key="1">
    <source>
        <dbReference type="HAMAP-Rule" id="MF_00406"/>
    </source>
</evidence>
<dbReference type="EC" id="4.2.1.59" evidence="1"/>
<dbReference type="EMBL" id="CP000312">
    <property type="protein sequence ID" value="ABG85336.1"/>
    <property type="molecule type" value="Genomic_DNA"/>
</dbReference>
<dbReference type="RefSeq" id="WP_003448879.1">
    <property type="nucleotide sequence ID" value="NZ_CAXVKH010000033.1"/>
</dbReference>
<dbReference type="SMR" id="Q0STU4"/>
<dbReference type="GeneID" id="93002358"/>
<dbReference type="KEGG" id="cpr:CPR_1141"/>
<dbReference type="Proteomes" id="UP000001824">
    <property type="component" value="Chromosome"/>
</dbReference>
<dbReference type="GO" id="GO:0005737">
    <property type="term" value="C:cytoplasm"/>
    <property type="evidence" value="ECO:0007669"/>
    <property type="project" value="UniProtKB-SubCell"/>
</dbReference>
<dbReference type="GO" id="GO:0016020">
    <property type="term" value="C:membrane"/>
    <property type="evidence" value="ECO:0007669"/>
    <property type="project" value="GOC"/>
</dbReference>
<dbReference type="GO" id="GO:0019171">
    <property type="term" value="F:(3R)-hydroxyacyl-[acyl-carrier-protein] dehydratase activity"/>
    <property type="evidence" value="ECO:0007669"/>
    <property type="project" value="UniProtKB-EC"/>
</dbReference>
<dbReference type="GO" id="GO:0006633">
    <property type="term" value="P:fatty acid biosynthetic process"/>
    <property type="evidence" value="ECO:0007669"/>
    <property type="project" value="UniProtKB-UniRule"/>
</dbReference>
<dbReference type="GO" id="GO:0009245">
    <property type="term" value="P:lipid A biosynthetic process"/>
    <property type="evidence" value="ECO:0007669"/>
    <property type="project" value="UniProtKB-UniRule"/>
</dbReference>
<dbReference type="CDD" id="cd01288">
    <property type="entry name" value="FabZ"/>
    <property type="match status" value="1"/>
</dbReference>
<dbReference type="FunFam" id="3.10.129.10:FF:000001">
    <property type="entry name" value="3-hydroxyacyl-[acyl-carrier-protein] dehydratase FabZ"/>
    <property type="match status" value="1"/>
</dbReference>
<dbReference type="Gene3D" id="3.10.129.10">
    <property type="entry name" value="Hotdog Thioesterase"/>
    <property type="match status" value="1"/>
</dbReference>
<dbReference type="HAMAP" id="MF_00406">
    <property type="entry name" value="FabZ"/>
    <property type="match status" value="1"/>
</dbReference>
<dbReference type="InterPro" id="IPR013114">
    <property type="entry name" value="FabA_FabZ"/>
</dbReference>
<dbReference type="InterPro" id="IPR010084">
    <property type="entry name" value="FabZ"/>
</dbReference>
<dbReference type="InterPro" id="IPR029069">
    <property type="entry name" value="HotDog_dom_sf"/>
</dbReference>
<dbReference type="NCBIfam" id="TIGR01750">
    <property type="entry name" value="fabZ"/>
    <property type="match status" value="1"/>
</dbReference>
<dbReference type="NCBIfam" id="NF000582">
    <property type="entry name" value="PRK00006.1"/>
    <property type="match status" value="1"/>
</dbReference>
<dbReference type="PANTHER" id="PTHR30272">
    <property type="entry name" value="3-HYDROXYACYL-[ACYL-CARRIER-PROTEIN] DEHYDRATASE"/>
    <property type="match status" value="1"/>
</dbReference>
<dbReference type="PANTHER" id="PTHR30272:SF1">
    <property type="entry name" value="3-HYDROXYACYL-[ACYL-CARRIER-PROTEIN] DEHYDRATASE"/>
    <property type="match status" value="1"/>
</dbReference>
<dbReference type="Pfam" id="PF07977">
    <property type="entry name" value="FabA"/>
    <property type="match status" value="1"/>
</dbReference>
<dbReference type="SUPFAM" id="SSF54637">
    <property type="entry name" value="Thioesterase/thiol ester dehydrase-isomerase"/>
    <property type="match status" value="1"/>
</dbReference>
<comment type="function">
    <text evidence="1">Involved in unsaturated fatty acids biosynthesis. Catalyzes the dehydration of short chain beta-hydroxyacyl-ACPs and long chain saturated and unsaturated beta-hydroxyacyl-ACPs.</text>
</comment>
<comment type="catalytic activity">
    <reaction evidence="1">
        <text>a (3R)-hydroxyacyl-[ACP] = a (2E)-enoyl-[ACP] + H2O</text>
        <dbReference type="Rhea" id="RHEA:13097"/>
        <dbReference type="Rhea" id="RHEA-COMP:9925"/>
        <dbReference type="Rhea" id="RHEA-COMP:9945"/>
        <dbReference type="ChEBI" id="CHEBI:15377"/>
        <dbReference type="ChEBI" id="CHEBI:78784"/>
        <dbReference type="ChEBI" id="CHEBI:78827"/>
        <dbReference type="EC" id="4.2.1.59"/>
    </reaction>
</comment>
<comment type="subcellular location">
    <subcellularLocation>
        <location evidence="1">Cytoplasm</location>
    </subcellularLocation>
</comment>
<comment type="similarity">
    <text evidence="1">Belongs to the thioester dehydratase family. FabZ subfamily.</text>
</comment>
<keyword id="KW-0963">Cytoplasm</keyword>
<keyword id="KW-0441">Lipid A biosynthesis</keyword>
<keyword id="KW-0444">Lipid biosynthesis</keyword>
<keyword id="KW-0443">Lipid metabolism</keyword>
<keyword id="KW-0456">Lyase</keyword>
<protein>
    <recommendedName>
        <fullName evidence="1">3-hydroxyacyl-[acyl-carrier-protein] dehydratase FabZ</fullName>
        <ecNumber evidence="1">4.2.1.59</ecNumber>
    </recommendedName>
    <alternativeName>
        <fullName evidence="1">(3R)-hydroxymyristoyl-[acyl-carrier-protein] dehydratase</fullName>
        <shortName evidence="1">(3R)-hydroxymyristoyl-ACP dehydrase</shortName>
    </alternativeName>
    <alternativeName>
        <fullName evidence="1">Beta-hydroxyacyl-ACP dehydratase</fullName>
    </alternativeName>
</protein>
<sequence length="139" mass="15382">MMNINEIKEILPHRYPFLLVDKVEEITESKVVAYKNVTINEPFFQGHFPDYPVMPGVLIVEALAQAGAIALLNKEEFKGKTPFFAGIDKVRFKKQVLPGDTLRLEVEIIKLRGSIGFGKATATVDGKIACSGEIMFAIG</sequence>
<accession>Q0STU4</accession>
<gene>
    <name evidence="1" type="primary">fabZ</name>
    <name type="ordered locus">CPR_1141</name>
</gene>